<sequence length="214" mass="24814">MPPKRYDDLSLLTLWPVAPDIDLAQYIYQFLTSEVGTQTEKEVYFTDSINSFPIHQLQELVNESNQSIYENIKINTALDLHELSSIIKKNTESLILKKIQNKKTNDLKPFQILSVINGLDVMFRSTLVSFTNEQAHLMLRDVMLRLRQVCNEYDCSPLTFKIILLFNRSDVMELLPKQRHSAAHQQKKMKYNNAMEGNSVGEFVGKYYCDEVAQ</sequence>
<keyword id="KW-0963">Cytoplasm</keyword>
<keyword id="KW-0227">DNA damage</keyword>
<keyword id="KW-0234">DNA repair</keyword>
<keyword id="KW-0469">Meiosis</keyword>
<keyword id="KW-0539">Nucleus</keyword>
<keyword id="KW-1185">Reference proteome</keyword>
<name>CSM2_CANGA</name>
<comment type="function">
    <text evidence="1">Involved in chromosome segregation during meiosis. Promotes efficient recombinational repair and functions in the protection of the genome from spontaneous and induced DNA damage like mutations and gross chromosomal rearrangements (GCRs) (By similarity).</text>
</comment>
<comment type="subcellular location">
    <subcellularLocation>
        <location evidence="1">Cytoplasm</location>
    </subcellularLocation>
    <subcellularLocation>
        <location evidence="1">Nucleus</location>
    </subcellularLocation>
</comment>
<comment type="similarity">
    <text evidence="2">Belongs to the CSM2 family.</text>
</comment>
<reference key="1">
    <citation type="journal article" date="2004" name="Nature">
        <title>Genome evolution in yeasts.</title>
        <authorList>
            <person name="Dujon B."/>
            <person name="Sherman D."/>
            <person name="Fischer G."/>
            <person name="Durrens P."/>
            <person name="Casaregola S."/>
            <person name="Lafontaine I."/>
            <person name="de Montigny J."/>
            <person name="Marck C."/>
            <person name="Neuveglise C."/>
            <person name="Talla E."/>
            <person name="Goffard N."/>
            <person name="Frangeul L."/>
            <person name="Aigle M."/>
            <person name="Anthouard V."/>
            <person name="Babour A."/>
            <person name="Barbe V."/>
            <person name="Barnay S."/>
            <person name="Blanchin S."/>
            <person name="Beckerich J.-M."/>
            <person name="Beyne E."/>
            <person name="Bleykasten C."/>
            <person name="Boisrame A."/>
            <person name="Boyer J."/>
            <person name="Cattolico L."/>
            <person name="Confanioleri F."/>
            <person name="de Daruvar A."/>
            <person name="Despons L."/>
            <person name="Fabre E."/>
            <person name="Fairhead C."/>
            <person name="Ferry-Dumazet H."/>
            <person name="Groppi A."/>
            <person name="Hantraye F."/>
            <person name="Hennequin C."/>
            <person name="Jauniaux N."/>
            <person name="Joyet P."/>
            <person name="Kachouri R."/>
            <person name="Kerrest A."/>
            <person name="Koszul R."/>
            <person name="Lemaire M."/>
            <person name="Lesur I."/>
            <person name="Ma L."/>
            <person name="Muller H."/>
            <person name="Nicaud J.-M."/>
            <person name="Nikolski M."/>
            <person name="Oztas S."/>
            <person name="Ozier-Kalogeropoulos O."/>
            <person name="Pellenz S."/>
            <person name="Potier S."/>
            <person name="Richard G.-F."/>
            <person name="Straub M.-L."/>
            <person name="Suleau A."/>
            <person name="Swennen D."/>
            <person name="Tekaia F."/>
            <person name="Wesolowski-Louvel M."/>
            <person name="Westhof E."/>
            <person name="Wirth B."/>
            <person name="Zeniou-Meyer M."/>
            <person name="Zivanovic Y."/>
            <person name="Bolotin-Fukuhara M."/>
            <person name="Thierry A."/>
            <person name="Bouchier C."/>
            <person name="Caudron B."/>
            <person name="Scarpelli C."/>
            <person name="Gaillardin C."/>
            <person name="Weissenbach J."/>
            <person name="Wincker P."/>
            <person name="Souciet J.-L."/>
        </authorList>
    </citation>
    <scope>NUCLEOTIDE SEQUENCE [LARGE SCALE GENOMIC DNA]</scope>
    <source>
        <strain>ATCC 2001 / BCRC 20586 / JCM 3761 / NBRC 0622 / NRRL Y-65 / CBS 138</strain>
    </source>
</reference>
<feature type="chain" id="PRO_0000280683" description="Chromosome segregation in meiosis protein 2">
    <location>
        <begin position="1"/>
        <end position="214"/>
    </location>
</feature>
<proteinExistence type="inferred from homology"/>
<evidence type="ECO:0000250" key="1"/>
<evidence type="ECO:0000305" key="2"/>
<organism>
    <name type="scientific">Candida glabrata (strain ATCC 2001 / BCRC 20586 / JCM 3761 / NBRC 0622 / NRRL Y-65 / CBS 138)</name>
    <name type="common">Yeast</name>
    <name type="synonym">Nakaseomyces glabratus</name>
    <dbReference type="NCBI Taxonomy" id="284593"/>
    <lineage>
        <taxon>Eukaryota</taxon>
        <taxon>Fungi</taxon>
        <taxon>Dikarya</taxon>
        <taxon>Ascomycota</taxon>
        <taxon>Saccharomycotina</taxon>
        <taxon>Saccharomycetes</taxon>
        <taxon>Saccharomycetales</taxon>
        <taxon>Saccharomycetaceae</taxon>
        <taxon>Nakaseomyces</taxon>
    </lineage>
</organism>
<accession>Q6FSP5</accession>
<protein>
    <recommendedName>
        <fullName>Chromosome segregation in meiosis protein 2</fullName>
    </recommendedName>
</protein>
<gene>
    <name type="primary">CSM2</name>
    <name type="ordered locus">CAGL0G08888g</name>
</gene>
<dbReference type="EMBL" id="CR380953">
    <property type="protein sequence ID" value="CAG59676.1"/>
    <property type="molecule type" value="Genomic_DNA"/>
</dbReference>
<dbReference type="RefSeq" id="XP_446749.1">
    <property type="nucleotide sequence ID" value="XM_446749.1"/>
</dbReference>
<dbReference type="SMR" id="Q6FSP5"/>
<dbReference type="FunCoup" id="Q6FSP5">
    <property type="interactions" value="26"/>
</dbReference>
<dbReference type="STRING" id="284593.Q6FSP5"/>
<dbReference type="EnsemblFungi" id="CAGL0G08888g-T">
    <property type="protein sequence ID" value="CAGL0G08888g-T-p1"/>
    <property type="gene ID" value="CAGL0G08888g"/>
</dbReference>
<dbReference type="KEGG" id="cgr:2888359"/>
<dbReference type="CGD" id="CAL0130013">
    <property type="gene designation" value="CAGL0G08888g"/>
</dbReference>
<dbReference type="VEuPathDB" id="FungiDB:B1J91_G08888g"/>
<dbReference type="VEuPathDB" id="FungiDB:CAGL0G08888g"/>
<dbReference type="eggNOG" id="ENOG502S2QF">
    <property type="taxonomic scope" value="Eukaryota"/>
</dbReference>
<dbReference type="HOGENOM" id="CLU_108124_0_0_1"/>
<dbReference type="InParanoid" id="Q6FSP5"/>
<dbReference type="Proteomes" id="UP000002428">
    <property type="component" value="Chromosome G"/>
</dbReference>
<dbReference type="GO" id="GO:0005737">
    <property type="term" value="C:cytoplasm"/>
    <property type="evidence" value="ECO:0007669"/>
    <property type="project" value="UniProtKB-SubCell"/>
</dbReference>
<dbReference type="GO" id="GO:0005634">
    <property type="term" value="C:nucleus"/>
    <property type="evidence" value="ECO:0007669"/>
    <property type="project" value="UniProtKB-SubCell"/>
</dbReference>
<dbReference type="GO" id="GO:0097196">
    <property type="term" value="C:Shu complex"/>
    <property type="evidence" value="ECO:0007669"/>
    <property type="project" value="EnsemblFungi"/>
</dbReference>
<dbReference type="GO" id="GO:0035861">
    <property type="term" value="C:site of double-strand break"/>
    <property type="evidence" value="ECO:0007669"/>
    <property type="project" value="EnsemblFungi"/>
</dbReference>
<dbReference type="GO" id="GO:0000730">
    <property type="term" value="P:DNA recombinase assembly"/>
    <property type="evidence" value="ECO:0007669"/>
    <property type="project" value="EnsemblFungi"/>
</dbReference>
<dbReference type="GO" id="GO:0043007">
    <property type="term" value="P:maintenance of rDNA"/>
    <property type="evidence" value="ECO:0007669"/>
    <property type="project" value="EnsemblFungi"/>
</dbReference>
<dbReference type="GO" id="GO:0045132">
    <property type="term" value="P:meiotic chromosome segregation"/>
    <property type="evidence" value="ECO:0007669"/>
    <property type="project" value="EnsemblFungi"/>
</dbReference>
<dbReference type="CDD" id="cd19478">
    <property type="entry name" value="Csm2"/>
    <property type="match status" value="1"/>
</dbReference>
<dbReference type="Gene3D" id="3.40.50.300">
    <property type="entry name" value="P-loop containing nucleotide triphosphate hydrolases"/>
    <property type="match status" value="1"/>
</dbReference>
<dbReference type="InterPro" id="IPR031783">
    <property type="entry name" value="Csm2"/>
</dbReference>
<dbReference type="InterPro" id="IPR027417">
    <property type="entry name" value="P-loop_NTPase"/>
</dbReference>
<dbReference type="Pfam" id="PF16834">
    <property type="entry name" value="CSM2"/>
    <property type="match status" value="1"/>
</dbReference>